<feature type="chain" id="PRO_0000142888" description="B-cell receptor-associated protein 29">
    <location>
        <begin position="1"/>
        <end position="241"/>
    </location>
</feature>
<feature type="topological domain" description="Lumenal" evidence="2">
    <location>
        <begin position="1"/>
        <end position="6"/>
    </location>
</feature>
<feature type="transmembrane region" description="Helical" evidence="2">
    <location>
        <begin position="7"/>
        <end position="27"/>
    </location>
</feature>
<feature type="topological domain" description="Cytoplasmic" evidence="2">
    <location>
        <begin position="28"/>
        <end position="43"/>
    </location>
</feature>
<feature type="transmembrane region" description="Helical" evidence="2">
    <location>
        <begin position="44"/>
        <end position="64"/>
    </location>
</feature>
<feature type="topological domain" description="Lumenal" evidence="2">
    <location>
        <begin position="65"/>
        <end position="103"/>
    </location>
</feature>
<feature type="transmembrane region" description="Helical" evidence="2">
    <location>
        <begin position="104"/>
        <end position="124"/>
    </location>
</feature>
<feature type="topological domain" description="Cytoplasmic" evidence="2">
    <location>
        <begin position="125"/>
        <end position="241"/>
    </location>
</feature>
<feature type="region of interest" description="Disordered" evidence="3">
    <location>
        <begin position="198"/>
        <end position="223"/>
    </location>
</feature>
<feature type="coiled-coil region" evidence="4">
    <location>
        <begin position="166"/>
        <end position="233"/>
    </location>
</feature>
<feature type="short sequence motif" description="Di-lysine motif">
    <location>
        <begin position="238"/>
        <end position="241"/>
    </location>
</feature>
<feature type="compositionally biased region" description="Basic and acidic residues" evidence="3">
    <location>
        <begin position="206"/>
        <end position="223"/>
    </location>
</feature>
<feature type="splice variant" id="VSP_047096" description="In isoform 2." evidence="5">
    <original>DRLERGNKKRL</original>
    <variation>HSSFGEFLSKRSHKNGSIGKQTGSRKGSFRKRQQEKTVNFIKDTCNILCQNDNFVMLASRKFKFRKMHYDRFVIFLMPHIGCIVMALSKYLMMFQIYCKVCIPALKKNISMLNTIFTY</variation>
    <location>
        <begin position="231"/>
        <end position="241"/>
    </location>
</feature>
<feature type="sequence conflict" description="In Ref. 1; AAF17230." evidence="5" ref="1">
    <original>P</original>
    <variation>L</variation>
    <location>
        <position position="25"/>
    </location>
</feature>
<feature type="sequence conflict" description="In Ref. 1; AAF17230." evidence="5" ref="1">
    <original>YI</original>
    <variation>SIL</variation>
    <location>
        <begin position="105"/>
        <end position="106"/>
    </location>
</feature>
<feature type="sequence conflict" description="In Ref. 1; AAF17230." evidence="5" ref="1">
    <original>L</original>
    <variation>R</variation>
    <location>
        <position position="131"/>
    </location>
</feature>
<feature type="helix" evidence="6">
    <location>
        <begin position="168"/>
        <end position="225"/>
    </location>
</feature>
<organism>
    <name type="scientific">Homo sapiens</name>
    <name type="common">Human</name>
    <dbReference type="NCBI Taxonomy" id="9606"/>
    <lineage>
        <taxon>Eukaryota</taxon>
        <taxon>Metazoa</taxon>
        <taxon>Chordata</taxon>
        <taxon>Craniata</taxon>
        <taxon>Vertebrata</taxon>
        <taxon>Euteleostomi</taxon>
        <taxon>Mammalia</taxon>
        <taxon>Eutheria</taxon>
        <taxon>Euarchontoglires</taxon>
        <taxon>Primates</taxon>
        <taxon>Haplorrhini</taxon>
        <taxon>Catarrhini</taxon>
        <taxon>Hominidae</taxon>
        <taxon>Homo</taxon>
    </lineage>
</organism>
<evidence type="ECO:0000250" key="1"/>
<evidence type="ECO:0000255" key="2"/>
<evidence type="ECO:0000256" key="3">
    <source>
        <dbReference type="SAM" id="MobiDB-lite"/>
    </source>
</evidence>
<evidence type="ECO:0000269" key="4">
    <source>
    </source>
</evidence>
<evidence type="ECO:0000305" key="5"/>
<evidence type="ECO:0007829" key="6">
    <source>
        <dbReference type="PDB" id="4W7Z"/>
    </source>
</evidence>
<protein>
    <recommendedName>
        <fullName>B-cell receptor-associated protein 29</fullName>
        <shortName>BCR-associated protein 29</shortName>
        <shortName>Bap29</shortName>
    </recommendedName>
</protein>
<gene>
    <name type="primary">BCAP29</name>
    <name type="synonym">BAP29</name>
</gene>
<name>BAP29_HUMAN</name>
<dbReference type="EMBL" id="AF126020">
    <property type="protein sequence ID" value="AAF17230.1"/>
    <property type="molecule type" value="mRNA"/>
</dbReference>
<dbReference type="EMBL" id="BT006981">
    <property type="protein sequence ID" value="AAP35627.1"/>
    <property type="molecule type" value="mRNA"/>
</dbReference>
<dbReference type="EMBL" id="AC004839">
    <property type="protein sequence ID" value="AAC83971.1"/>
    <property type="molecule type" value="Genomic_DNA"/>
</dbReference>
<dbReference type="EMBL" id="AC078937">
    <property type="status" value="NOT_ANNOTATED_CDS"/>
    <property type="molecule type" value="Genomic_DNA"/>
</dbReference>
<dbReference type="EMBL" id="CH471070">
    <property type="protein sequence ID" value="EAW83408.1"/>
    <property type="molecule type" value="Genomic_DNA"/>
</dbReference>
<dbReference type="EMBL" id="BC008478">
    <property type="protein sequence ID" value="AAH08478.1"/>
    <property type="molecule type" value="mRNA"/>
</dbReference>
<dbReference type="CCDS" id="CCDS34730.1">
    <molecule id="Q9UHQ4-2"/>
</dbReference>
<dbReference type="CCDS" id="CCDS34731.1">
    <molecule id="Q9UHQ4-1"/>
</dbReference>
<dbReference type="RefSeq" id="NP_001008405.1">
    <molecule id="Q9UHQ4-2"/>
    <property type="nucleotide sequence ID" value="NM_001008405.4"/>
</dbReference>
<dbReference type="RefSeq" id="NP_001358282.1">
    <molecule id="Q9UHQ4-1"/>
    <property type="nucleotide sequence ID" value="NM_001371353.1"/>
</dbReference>
<dbReference type="RefSeq" id="NP_001358283.1">
    <molecule id="Q9UHQ4-1"/>
    <property type="nucleotide sequence ID" value="NM_001371354.1"/>
</dbReference>
<dbReference type="RefSeq" id="NP_061332.2">
    <molecule id="Q9UHQ4-1"/>
    <property type="nucleotide sequence ID" value="NM_018844.4"/>
</dbReference>
<dbReference type="RefSeq" id="XP_006716114.1">
    <property type="nucleotide sequence ID" value="XM_006716051.2"/>
</dbReference>
<dbReference type="RefSeq" id="XP_011514708.1">
    <property type="nucleotide sequence ID" value="XM_011516406.2"/>
</dbReference>
<dbReference type="PDB" id="4W7Y">
    <property type="method" value="X-ray"/>
    <property type="resolution" value="2.50 A"/>
    <property type="chains" value="A/B=168-229"/>
</dbReference>
<dbReference type="PDB" id="4W7Z">
    <property type="method" value="X-ray"/>
    <property type="resolution" value="2.20 A"/>
    <property type="chains" value="A/B/C/D=168-229"/>
</dbReference>
<dbReference type="PDB" id="4W80">
    <property type="method" value="X-ray"/>
    <property type="resolution" value="3.20 A"/>
    <property type="chains" value="A/B/C/D=168-229"/>
</dbReference>
<dbReference type="PDBsum" id="4W7Y"/>
<dbReference type="PDBsum" id="4W7Z"/>
<dbReference type="PDBsum" id="4W80"/>
<dbReference type="SMR" id="Q9UHQ4"/>
<dbReference type="BioGRID" id="121019">
    <property type="interactions" value="72"/>
</dbReference>
<dbReference type="FunCoup" id="Q9UHQ4">
    <property type="interactions" value="1316"/>
</dbReference>
<dbReference type="IntAct" id="Q9UHQ4">
    <property type="interactions" value="17"/>
</dbReference>
<dbReference type="MINT" id="Q9UHQ4"/>
<dbReference type="STRING" id="9606.ENSP00000368414"/>
<dbReference type="TCDB" id="3.A.5.9.1">
    <property type="family name" value="the general secretory pathway (sec) family"/>
</dbReference>
<dbReference type="GlyGen" id="Q9UHQ4">
    <property type="glycosylation" value="1 site, 1 O-linked glycan (1 site)"/>
</dbReference>
<dbReference type="iPTMnet" id="Q9UHQ4"/>
<dbReference type="MetOSite" id="Q9UHQ4"/>
<dbReference type="PhosphoSitePlus" id="Q9UHQ4"/>
<dbReference type="SwissPalm" id="Q9UHQ4"/>
<dbReference type="BioMuta" id="BCAP29"/>
<dbReference type="DMDM" id="25008167"/>
<dbReference type="jPOST" id="Q9UHQ4"/>
<dbReference type="MassIVE" id="Q9UHQ4"/>
<dbReference type="PaxDb" id="9606-ENSP00000368414"/>
<dbReference type="PeptideAtlas" id="Q9UHQ4"/>
<dbReference type="ProteomicsDB" id="33975"/>
<dbReference type="ProteomicsDB" id="84399">
    <molecule id="Q9UHQ4-1"/>
</dbReference>
<dbReference type="Pumba" id="Q9UHQ4"/>
<dbReference type="Antibodypedia" id="17207">
    <property type="antibodies" value="299 antibodies from 32 providers"/>
</dbReference>
<dbReference type="Antibodypedia" id="81585">
    <property type="antibodies" value="1 antibodies from 1 providers"/>
</dbReference>
<dbReference type="DNASU" id="55973"/>
<dbReference type="Ensembl" id="ENST00000005259.9">
    <molecule id="Q9UHQ4-1"/>
    <property type="protein sequence ID" value="ENSP00000005259.4"/>
    <property type="gene ID" value="ENSG00000075790.12"/>
</dbReference>
<dbReference type="Ensembl" id="ENST00000379117.6">
    <molecule id="Q9UHQ4-1"/>
    <property type="protein sequence ID" value="ENSP00000368412.2"/>
    <property type="gene ID" value="ENSG00000075790.12"/>
</dbReference>
<dbReference type="Ensembl" id="ENST00000445771.6">
    <molecule id="Q9UHQ4-2"/>
    <property type="protein sequence ID" value="ENSP00000400718.2"/>
    <property type="gene ID" value="ENSG00000075790.12"/>
</dbReference>
<dbReference type="Ensembl" id="ENST00000640518.4">
    <molecule id="Q9UHQ4-1"/>
    <property type="protein sequence ID" value="ENSP00000491801.4"/>
    <property type="gene ID" value="ENSG00000283852.4"/>
</dbReference>
<dbReference type="Ensembl" id="ENST00000640915.4">
    <molecule id="Q9UHQ4-1"/>
    <property type="protein sequence ID" value="ENSP00000490977.4"/>
    <property type="gene ID" value="ENSG00000283852.4"/>
</dbReference>
<dbReference type="GeneID" id="55973"/>
<dbReference type="KEGG" id="hsa:55973"/>
<dbReference type="MANE-Select" id="ENST00000005259.9">
    <property type="protein sequence ID" value="ENSP00000005259.4"/>
    <property type="RefSeq nucleotide sequence ID" value="NM_018844.4"/>
    <property type="RefSeq protein sequence ID" value="NP_061332.2"/>
</dbReference>
<dbReference type="UCSC" id="uc003vej.3">
    <molecule id="Q9UHQ4-1"/>
    <property type="organism name" value="human"/>
</dbReference>
<dbReference type="AGR" id="HGNC:24131"/>
<dbReference type="CTD" id="55973"/>
<dbReference type="DisGeNET" id="55973"/>
<dbReference type="GeneCards" id="BCAP29"/>
<dbReference type="HGNC" id="HGNC:24131">
    <property type="gene designation" value="BCAP29"/>
</dbReference>
<dbReference type="HPA" id="ENSG00000075790">
    <property type="expression patterns" value="Low tissue specificity"/>
</dbReference>
<dbReference type="MIM" id="619612">
    <property type="type" value="gene"/>
</dbReference>
<dbReference type="neXtProt" id="NX_Q9UHQ4"/>
<dbReference type="OpenTargets" id="ENSG00000075790"/>
<dbReference type="PharmGKB" id="PA134939094"/>
<dbReference type="VEuPathDB" id="HostDB:ENSG00000075790"/>
<dbReference type="VEuPathDB" id="HostDB:ENSG00000288558"/>
<dbReference type="eggNOG" id="KOG1962">
    <property type="taxonomic scope" value="Eukaryota"/>
</dbReference>
<dbReference type="GeneTree" id="ENSGT00390000011863"/>
<dbReference type="InParanoid" id="Q9UHQ4"/>
<dbReference type="OrthoDB" id="435607at2759"/>
<dbReference type="PAN-GO" id="Q9UHQ4">
    <property type="GO annotations" value="3 GO annotations based on evolutionary models"/>
</dbReference>
<dbReference type="PhylomeDB" id="Q9UHQ4"/>
<dbReference type="TreeFam" id="TF315310"/>
<dbReference type="PathwayCommons" id="Q9UHQ4"/>
<dbReference type="SignaLink" id="Q9UHQ4"/>
<dbReference type="BioGRID-ORCS" id="55973">
    <property type="hits" value="50 hits in 1122 CRISPR screens"/>
</dbReference>
<dbReference type="ChiTaRS" id="BCAP29">
    <property type="organism name" value="human"/>
</dbReference>
<dbReference type="EvolutionaryTrace" id="Q9UHQ4"/>
<dbReference type="GeneWiki" id="BCAP29"/>
<dbReference type="GenomeRNAi" id="55973"/>
<dbReference type="Pharos" id="Q9UHQ4">
    <property type="development level" value="Tbio"/>
</dbReference>
<dbReference type="PRO" id="PR:Q9UHQ4"/>
<dbReference type="Proteomes" id="UP000005640">
    <property type="component" value="Chromosome 7"/>
</dbReference>
<dbReference type="RNAct" id="Q9UHQ4">
    <property type="molecule type" value="protein"/>
</dbReference>
<dbReference type="Bgee" id="ENSG00000075790">
    <property type="expression patterns" value="Expressed in calcaneal tendon and 98 other cell types or tissues"/>
</dbReference>
<dbReference type="ExpressionAtlas" id="Q9UHQ4">
    <property type="expression patterns" value="baseline and differential"/>
</dbReference>
<dbReference type="GO" id="GO:0005789">
    <property type="term" value="C:endoplasmic reticulum membrane"/>
    <property type="evidence" value="ECO:0000318"/>
    <property type="project" value="GO_Central"/>
</dbReference>
<dbReference type="GO" id="GO:0016020">
    <property type="term" value="C:membrane"/>
    <property type="evidence" value="ECO:0007005"/>
    <property type="project" value="UniProtKB"/>
</dbReference>
<dbReference type="GO" id="GO:0006915">
    <property type="term" value="P:apoptotic process"/>
    <property type="evidence" value="ECO:0007669"/>
    <property type="project" value="UniProtKB-KW"/>
</dbReference>
<dbReference type="GO" id="GO:0006888">
    <property type="term" value="P:endoplasmic reticulum to Golgi vesicle-mediated transport"/>
    <property type="evidence" value="ECO:0000318"/>
    <property type="project" value="GO_Central"/>
</dbReference>
<dbReference type="GO" id="GO:0006886">
    <property type="term" value="P:intracellular protein transport"/>
    <property type="evidence" value="ECO:0007669"/>
    <property type="project" value="InterPro"/>
</dbReference>
<dbReference type="GO" id="GO:0001649">
    <property type="term" value="P:osteoblast differentiation"/>
    <property type="evidence" value="ECO:0007005"/>
    <property type="project" value="UniProtKB"/>
</dbReference>
<dbReference type="GO" id="GO:0070973">
    <property type="term" value="P:protein localization to endoplasmic reticulum exit site"/>
    <property type="evidence" value="ECO:0000318"/>
    <property type="project" value="GO_Central"/>
</dbReference>
<dbReference type="FunFam" id="1.20.5.110:FF:000011">
    <property type="entry name" value="B-cell receptor-associated protein 29"/>
    <property type="match status" value="1"/>
</dbReference>
<dbReference type="Gene3D" id="1.20.5.110">
    <property type="match status" value="1"/>
</dbReference>
<dbReference type="InterPro" id="IPR008417">
    <property type="entry name" value="BAP29/BAP31"/>
</dbReference>
<dbReference type="InterPro" id="IPR040463">
    <property type="entry name" value="BAP29/BAP31_N"/>
</dbReference>
<dbReference type="InterPro" id="IPR041672">
    <property type="entry name" value="Bap31/Bap29_C"/>
</dbReference>
<dbReference type="PANTHER" id="PTHR12701:SF5">
    <property type="entry name" value="B-CELL RECEPTOR-ASSOCIATED PROTEIN 29"/>
    <property type="match status" value="1"/>
</dbReference>
<dbReference type="PANTHER" id="PTHR12701">
    <property type="entry name" value="BCR-ASSOCIATED PROTEIN, BAP"/>
    <property type="match status" value="1"/>
</dbReference>
<dbReference type="Pfam" id="PF05529">
    <property type="entry name" value="Bap31"/>
    <property type="match status" value="1"/>
</dbReference>
<dbReference type="Pfam" id="PF18035">
    <property type="entry name" value="Bap31_Bap29_C"/>
    <property type="match status" value="1"/>
</dbReference>
<keyword id="KW-0002">3D-structure</keyword>
<keyword id="KW-0025">Alternative splicing</keyword>
<keyword id="KW-0053">Apoptosis</keyword>
<keyword id="KW-0175">Coiled coil</keyword>
<keyword id="KW-0256">Endoplasmic reticulum</keyword>
<keyword id="KW-0931">ER-Golgi transport</keyword>
<keyword id="KW-0472">Membrane</keyword>
<keyword id="KW-0653">Protein transport</keyword>
<keyword id="KW-1267">Proteomics identification</keyword>
<keyword id="KW-1185">Reference proteome</keyword>
<keyword id="KW-0812">Transmembrane</keyword>
<keyword id="KW-1133">Transmembrane helix</keyword>
<keyword id="KW-0813">Transport</keyword>
<sequence length="241" mass="28320">MTLQWAAVATFLYAEIGLILIFCLPFIPPQRWQKIFSFNVWGKIATFWNKAFLTIIILLIVLFLDAVREVRKYSSVHTIEKSSTSRPDAYEHTQMKLFRSQRNLYISGFSLFFWLVLRRLVTLITQLAKELSNKGVLKTQAENTNKAAKKFMEENEKLKRILKSHGKDEECVLEAENKKLVEDQEKLKTELRKTSDALSKAQNDVMEMKMQSERLSKEYDQLLKEHSELQDRLERGNKKRL</sequence>
<comment type="function">
    <text evidence="1">May play a role in anterograde transport of membrane proteins from the endoplasmic reticulum to the Golgi. May be involved in CASP8-mediated apoptosis (By similarity).</text>
</comment>
<comment type="subunit">
    <text evidence="1 4">Homodimer (PubMed:25327138). Heterodimer with BCAP31. Binds CASP8 (isoform 9) as a complex containing BCAP31, BCAP29, BCL2 and/or BCL2L1. Interacts with VAMP3, VAMP1 and membrane IgD immunoglobulins. May interact with ACTG1 and non-muscle myosin II (By similarity).</text>
</comment>
<comment type="interaction">
    <interactant intactId="EBI-2548400">
        <id>Q9UHQ4</id>
    </interactant>
    <interactant intactId="EBI-77683">
        <id>P51572</id>
        <label>BCAP31</label>
    </interactant>
    <organismsDiffer>false</organismsDiffer>
    <experiments>4</experiments>
</comment>
<comment type="interaction">
    <interactant intactId="EBI-2548400">
        <id>Q9UHQ4</id>
    </interactant>
    <interactant intactId="EBI-739580">
        <id>Q13137</id>
        <label>CALCOCO2</label>
    </interactant>
    <organismsDiffer>false</organismsDiffer>
    <experiments>2</experiments>
</comment>
<comment type="subcellular location">
    <subcellularLocation>
        <location evidence="1">Endoplasmic reticulum membrane</location>
        <topology evidence="1">Multi-pass membrane protein</topology>
    </subcellularLocation>
</comment>
<comment type="alternative products">
    <event type="alternative splicing"/>
    <isoform>
        <id>Q9UHQ4-1</id>
        <name>1</name>
        <sequence type="displayed"/>
    </isoform>
    <isoform>
        <id>Q9UHQ4-2</id>
        <name>2</name>
        <sequence type="described" ref="VSP_047096"/>
    </isoform>
</comment>
<comment type="similarity">
    <text evidence="5">Belongs to the BCAP29/BCAP31 family.</text>
</comment>
<proteinExistence type="evidence at protein level"/>
<reference key="1">
    <citation type="journal article" date="2000" name="Proc. Natl. Acad. Sci. U.S.A.">
        <title>Gene expression profiling in the human hypothalamus-pituitary-adrenal axis and full-length cDNA cloning.</title>
        <authorList>
            <person name="Hu R.-M."/>
            <person name="Han Z.-G."/>
            <person name="Song H.-D."/>
            <person name="Peng Y.-D."/>
            <person name="Huang Q.-H."/>
            <person name="Ren S.-X."/>
            <person name="Gu Y.-J."/>
            <person name="Huang C.-H."/>
            <person name="Li Y.-B."/>
            <person name="Jiang C.-L."/>
            <person name="Fu G."/>
            <person name="Zhang Q.-H."/>
            <person name="Gu B.-W."/>
            <person name="Dai M."/>
            <person name="Mao Y.-F."/>
            <person name="Gao G.-F."/>
            <person name="Rong R."/>
            <person name="Ye M."/>
            <person name="Zhou J."/>
            <person name="Xu S.-H."/>
            <person name="Gu J."/>
            <person name="Shi J.-X."/>
            <person name="Jin W.-R."/>
            <person name="Zhang C.-K."/>
            <person name="Wu T.-M."/>
            <person name="Huang G.-Y."/>
            <person name="Chen Z."/>
            <person name="Chen M.-D."/>
            <person name="Chen J.-L."/>
        </authorList>
    </citation>
    <scope>NUCLEOTIDE SEQUENCE [LARGE SCALE MRNA] (ISOFORM 1)</scope>
    <source>
        <tissue>Adrenal gland</tissue>
    </source>
</reference>
<reference key="2">
    <citation type="submission" date="2003-05" db="EMBL/GenBank/DDBJ databases">
        <title>Cloning of human full-length CDSs in BD Creator(TM) system donor vector.</title>
        <authorList>
            <person name="Kalnine N."/>
            <person name="Chen X."/>
            <person name="Rolfs A."/>
            <person name="Halleck A."/>
            <person name="Hines L."/>
            <person name="Eisenstein S."/>
            <person name="Koundinya M."/>
            <person name="Raphael J."/>
            <person name="Moreira D."/>
            <person name="Kelley T."/>
            <person name="LaBaer J."/>
            <person name="Lin Y."/>
            <person name="Phelan M."/>
            <person name="Farmer A."/>
        </authorList>
    </citation>
    <scope>NUCLEOTIDE SEQUENCE [LARGE SCALE MRNA] (ISOFORM 1)</scope>
</reference>
<reference key="3">
    <citation type="journal article" date="2003" name="Nature">
        <title>The DNA sequence of human chromosome 7.</title>
        <authorList>
            <person name="Hillier L.W."/>
            <person name="Fulton R.S."/>
            <person name="Fulton L.A."/>
            <person name="Graves T.A."/>
            <person name="Pepin K.H."/>
            <person name="Wagner-McPherson C."/>
            <person name="Layman D."/>
            <person name="Maas J."/>
            <person name="Jaeger S."/>
            <person name="Walker R."/>
            <person name="Wylie K."/>
            <person name="Sekhon M."/>
            <person name="Becker M.C."/>
            <person name="O'Laughlin M.D."/>
            <person name="Schaller M.E."/>
            <person name="Fewell G.A."/>
            <person name="Delehaunty K.D."/>
            <person name="Miner T.L."/>
            <person name="Nash W.E."/>
            <person name="Cordes M."/>
            <person name="Du H."/>
            <person name="Sun H."/>
            <person name="Edwards J."/>
            <person name="Bradshaw-Cordum H."/>
            <person name="Ali J."/>
            <person name="Andrews S."/>
            <person name="Isak A."/>
            <person name="Vanbrunt A."/>
            <person name="Nguyen C."/>
            <person name="Du F."/>
            <person name="Lamar B."/>
            <person name="Courtney L."/>
            <person name="Kalicki J."/>
            <person name="Ozersky P."/>
            <person name="Bielicki L."/>
            <person name="Scott K."/>
            <person name="Holmes A."/>
            <person name="Harkins R."/>
            <person name="Harris A."/>
            <person name="Strong C.M."/>
            <person name="Hou S."/>
            <person name="Tomlinson C."/>
            <person name="Dauphin-Kohlberg S."/>
            <person name="Kozlowicz-Reilly A."/>
            <person name="Leonard S."/>
            <person name="Rohlfing T."/>
            <person name="Rock S.M."/>
            <person name="Tin-Wollam A.-M."/>
            <person name="Abbott A."/>
            <person name="Minx P."/>
            <person name="Maupin R."/>
            <person name="Strowmatt C."/>
            <person name="Latreille P."/>
            <person name="Miller N."/>
            <person name="Johnson D."/>
            <person name="Murray J."/>
            <person name="Woessner J.P."/>
            <person name="Wendl M.C."/>
            <person name="Yang S.-P."/>
            <person name="Schultz B.R."/>
            <person name="Wallis J.W."/>
            <person name="Spieth J."/>
            <person name="Bieri T.A."/>
            <person name="Nelson J.O."/>
            <person name="Berkowicz N."/>
            <person name="Wohldmann P.E."/>
            <person name="Cook L.L."/>
            <person name="Hickenbotham M.T."/>
            <person name="Eldred J."/>
            <person name="Williams D."/>
            <person name="Bedell J.A."/>
            <person name="Mardis E.R."/>
            <person name="Clifton S.W."/>
            <person name="Chissoe S.L."/>
            <person name="Marra M.A."/>
            <person name="Raymond C."/>
            <person name="Haugen E."/>
            <person name="Gillett W."/>
            <person name="Zhou Y."/>
            <person name="James R."/>
            <person name="Phelps K."/>
            <person name="Iadanoto S."/>
            <person name="Bubb K."/>
            <person name="Simms E."/>
            <person name="Levy R."/>
            <person name="Clendenning J."/>
            <person name="Kaul R."/>
            <person name="Kent W.J."/>
            <person name="Furey T.S."/>
            <person name="Baertsch R.A."/>
            <person name="Brent M.R."/>
            <person name="Keibler E."/>
            <person name="Flicek P."/>
            <person name="Bork P."/>
            <person name="Suyama M."/>
            <person name="Bailey J.A."/>
            <person name="Portnoy M.E."/>
            <person name="Torrents D."/>
            <person name="Chinwalla A.T."/>
            <person name="Gish W.R."/>
            <person name="Eddy S.R."/>
            <person name="McPherson J.D."/>
            <person name="Olson M.V."/>
            <person name="Eichler E.E."/>
            <person name="Green E.D."/>
            <person name="Waterston R.H."/>
            <person name="Wilson R.K."/>
        </authorList>
    </citation>
    <scope>NUCLEOTIDE SEQUENCE [LARGE SCALE GENOMIC DNA]</scope>
</reference>
<reference key="4">
    <citation type="submission" date="2005-07" db="EMBL/GenBank/DDBJ databases">
        <authorList>
            <person name="Mural R.J."/>
            <person name="Istrail S."/>
            <person name="Sutton G.G."/>
            <person name="Florea L."/>
            <person name="Halpern A.L."/>
            <person name="Mobarry C.M."/>
            <person name="Lippert R."/>
            <person name="Walenz B."/>
            <person name="Shatkay H."/>
            <person name="Dew I."/>
            <person name="Miller J.R."/>
            <person name="Flanigan M.J."/>
            <person name="Edwards N.J."/>
            <person name="Bolanos R."/>
            <person name="Fasulo D."/>
            <person name="Halldorsson B.V."/>
            <person name="Hannenhalli S."/>
            <person name="Turner R."/>
            <person name="Yooseph S."/>
            <person name="Lu F."/>
            <person name="Nusskern D.R."/>
            <person name="Shue B.C."/>
            <person name="Zheng X.H."/>
            <person name="Zhong F."/>
            <person name="Delcher A.L."/>
            <person name="Huson D.H."/>
            <person name="Kravitz S.A."/>
            <person name="Mouchard L."/>
            <person name="Reinert K."/>
            <person name="Remington K.A."/>
            <person name="Clark A.G."/>
            <person name="Waterman M.S."/>
            <person name="Eichler E.E."/>
            <person name="Adams M.D."/>
            <person name="Hunkapiller M.W."/>
            <person name="Myers E.W."/>
            <person name="Venter J.C."/>
        </authorList>
    </citation>
    <scope>NUCLEOTIDE SEQUENCE [LARGE SCALE GENOMIC DNA]</scope>
</reference>
<reference key="5">
    <citation type="journal article" date="2004" name="Genome Res.">
        <title>The status, quality, and expansion of the NIH full-length cDNA project: the Mammalian Gene Collection (MGC).</title>
        <authorList>
            <consortium name="The MGC Project Team"/>
        </authorList>
    </citation>
    <scope>NUCLEOTIDE SEQUENCE [LARGE SCALE MRNA] (ISOFORM 1)</scope>
    <source>
        <tissue>Prostate</tissue>
    </source>
</reference>
<reference key="6">
    <citation type="journal article" date="2011" name="BMC Syst. Biol.">
        <title>Initial characterization of the human central proteome.</title>
        <authorList>
            <person name="Burkard T.R."/>
            <person name="Planyavsky M."/>
            <person name="Kaupe I."/>
            <person name="Breitwieser F.P."/>
            <person name="Buerckstuemmer T."/>
            <person name="Bennett K.L."/>
            <person name="Superti-Furga G."/>
            <person name="Colinge J."/>
        </authorList>
    </citation>
    <scope>IDENTIFICATION BY MASS SPECTROMETRY [LARGE SCALE ANALYSIS]</scope>
</reference>
<reference key="7">
    <citation type="journal article" date="2014" name="Chem. Commun. (Camb.)">
        <title>A disulfide polymerized protein crystal.</title>
        <authorList>
            <person name="Quistgaard E.M."/>
        </authorList>
    </citation>
    <scope>X-RAY CRYSTALLOGRAPHY (2.20 ANGSTROMS) OF 168-229</scope>
    <scope>SUBUNIT</scope>
    <scope>COILED COIL</scope>
</reference>
<accession>Q9UHQ4</accession>
<accession>G5E9L4</accession>
<accession>O95003</accession>